<keyword id="KW-0010">Activator</keyword>
<keyword id="KW-0025">Alternative splicing</keyword>
<keyword id="KW-0175">Coiled coil</keyword>
<keyword id="KW-0221">Differentiation</keyword>
<keyword id="KW-0238">DNA-binding</keyword>
<keyword id="KW-0524">Neurogenesis</keyword>
<keyword id="KW-0539">Nucleus</keyword>
<keyword id="KW-1267">Proteomics identification</keyword>
<keyword id="KW-1185">Reference proteome</keyword>
<keyword id="KW-0677">Repeat</keyword>
<keyword id="KW-0804">Transcription</keyword>
<keyword id="KW-0805">Transcription regulation</keyword>
<keyword id="KW-0832">Ubl conjugation</keyword>
<reference key="1">
    <citation type="journal article" date="2004" name="Mol. Cell. Biol.">
        <title>Identification of a novel basic helix-loop-helix-PAS factor, NXF, reveals a Sim2 competitive, positive regulatory role in dendritic-cytoskeleton modulator drebrin gene expression.</title>
        <authorList>
            <person name="Ooe N."/>
            <person name="Saito K."/>
            <person name="Mikami N."/>
            <person name="Nakatuka I."/>
            <person name="Kaneko H."/>
        </authorList>
    </citation>
    <scope>NUCLEOTIDE SEQUENCE [MRNA] (ISOFORM 1)</scope>
    <scope>FUNCTION</scope>
    <scope>SUBUNIT</scope>
    <scope>TISSUE SPECIFICITY</scope>
    <source>
        <tissue>Fetal brain</tissue>
    </source>
</reference>
<reference key="2">
    <citation type="journal article" date="2004" name="Nat. Genet.">
        <title>Complete sequencing and characterization of 21,243 full-length human cDNAs.</title>
        <authorList>
            <person name="Ota T."/>
            <person name="Suzuki Y."/>
            <person name="Nishikawa T."/>
            <person name="Otsuki T."/>
            <person name="Sugiyama T."/>
            <person name="Irie R."/>
            <person name="Wakamatsu A."/>
            <person name="Hayashi K."/>
            <person name="Sato H."/>
            <person name="Nagai K."/>
            <person name="Kimura K."/>
            <person name="Makita H."/>
            <person name="Sekine M."/>
            <person name="Obayashi M."/>
            <person name="Nishi T."/>
            <person name="Shibahara T."/>
            <person name="Tanaka T."/>
            <person name="Ishii S."/>
            <person name="Yamamoto J."/>
            <person name="Saito K."/>
            <person name="Kawai Y."/>
            <person name="Isono Y."/>
            <person name="Nakamura Y."/>
            <person name="Nagahari K."/>
            <person name="Murakami K."/>
            <person name="Yasuda T."/>
            <person name="Iwayanagi T."/>
            <person name="Wagatsuma M."/>
            <person name="Shiratori A."/>
            <person name="Sudo H."/>
            <person name="Hosoiri T."/>
            <person name="Kaku Y."/>
            <person name="Kodaira H."/>
            <person name="Kondo H."/>
            <person name="Sugawara M."/>
            <person name="Takahashi M."/>
            <person name="Kanda K."/>
            <person name="Yokoi T."/>
            <person name="Furuya T."/>
            <person name="Kikkawa E."/>
            <person name="Omura Y."/>
            <person name="Abe K."/>
            <person name="Kamihara K."/>
            <person name="Katsuta N."/>
            <person name="Sato K."/>
            <person name="Tanikawa M."/>
            <person name="Yamazaki M."/>
            <person name="Ninomiya K."/>
            <person name="Ishibashi T."/>
            <person name="Yamashita H."/>
            <person name="Murakawa K."/>
            <person name="Fujimori K."/>
            <person name="Tanai H."/>
            <person name="Kimata M."/>
            <person name="Watanabe M."/>
            <person name="Hiraoka S."/>
            <person name="Chiba Y."/>
            <person name="Ishida S."/>
            <person name="Ono Y."/>
            <person name="Takiguchi S."/>
            <person name="Watanabe S."/>
            <person name="Yosida M."/>
            <person name="Hotuta T."/>
            <person name="Kusano J."/>
            <person name="Kanehori K."/>
            <person name="Takahashi-Fujii A."/>
            <person name="Hara H."/>
            <person name="Tanase T.-O."/>
            <person name="Nomura Y."/>
            <person name="Togiya S."/>
            <person name="Komai F."/>
            <person name="Hara R."/>
            <person name="Takeuchi K."/>
            <person name="Arita M."/>
            <person name="Imose N."/>
            <person name="Musashino K."/>
            <person name="Yuuki H."/>
            <person name="Oshima A."/>
            <person name="Sasaki N."/>
            <person name="Aotsuka S."/>
            <person name="Yoshikawa Y."/>
            <person name="Matsunawa H."/>
            <person name="Ichihara T."/>
            <person name="Shiohata N."/>
            <person name="Sano S."/>
            <person name="Moriya S."/>
            <person name="Momiyama H."/>
            <person name="Satoh N."/>
            <person name="Takami S."/>
            <person name="Terashima Y."/>
            <person name="Suzuki O."/>
            <person name="Nakagawa S."/>
            <person name="Senoh A."/>
            <person name="Mizoguchi H."/>
            <person name="Goto Y."/>
            <person name="Shimizu F."/>
            <person name="Wakebe H."/>
            <person name="Hishigaki H."/>
            <person name="Watanabe T."/>
            <person name="Sugiyama A."/>
            <person name="Takemoto M."/>
            <person name="Kawakami B."/>
            <person name="Yamazaki M."/>
            <person name="Watanabe K."/>
            <person name="Kumagai A."/>
            <person name="Itakura S."/>
            <person name="Fukuzumi Y."/>
            <person name="Fujimori Y."/>
            <person name="Komiyama M."/>
            <person name="Tashiro H."/>
            <person name="Tanigami A."/>
            <person name="Fujiwara T."/>
            <person name="Ono T."/>
            <person name="Yamada K."/>
            <person name="Fujii Y."/>
            <person name="Ozaki K."/>
            <person name="Hirao M."/>
            <person name="Ohmori Y."/>
            <person name="Kawabata A."/>
            <person name="Hikiji T."/>
            <person name="Kobatake N."/>
            <person name="Inagaki H."/>
            <person name="Ikema Y."/>
            <person name="Okamoto S."/>
            <person name="Okitani R."/>
            <person name="Kawakami T."/>
            <person name="Noguchi S."/>
            <person name="Itoh T."/>
            <person name="Shigeta K."/>
            <person name="Senba T."/>
            <person name="Matsumura K."/>
            <person name="Nakajima Y."/>
            <person name="Mizuno T."/>
            <person name="Morinaga M."/>
            <person name="Sasaki M."/>
            <person name="Togashi T."/>
            <person name="Oyama M."/>
            <person name="Hata H."/>
            <person name="Watanabe M."/>
            <person name="Komatsu T."/>
            <person name="Mizushima-Sugano J."/>
            <person name="Satoh T."/>
            <person name="Shirai Y."/>
            <person name="Takahashi Y."/>
            <person name="Nakagawa K."/>
            <person name="Okumura K."/>
            <person name="Nagase T."/>
            <person name="Nomura N."/>
            <person name="Kikuchi H."/>
            <person name="Masuho Y."/>
            <person name="Yamashita R."/>
            <person name="Nakai K."/>
            <person name="Yada T."/>
            <person name="Nakamura Y."/>
            <person name="Ohara O."/>
            <person name="Isogai T."/>
            <person name="Sugano S."/>
        </authorList>
    </citation>
    <scope>NUCLEOTIDE SEQUENCE [LARGE SCALE MRNA] (ISOFORM 1)</scope>
    <source>
        <tissue>Uterus</tissue>
    </source>
</reference>
<reference key="3">
    <citation type="journal article" date="2006" name="Nature">
        <title>Human chromosome 11 DNA sequence and analysis including novel gene identification.</title>
        <authorList>
            <person name="Taylor T.D."/>
            <person name="Noguchi H."/>
            <person name="Totoki Y."/>
            <person name="Toyoda A."/>
            <person name="Kuroki Y."/>
            <person name="Dewar K."/>
            <person name="Lloyd C."/>
            <person name="Itoh T."/>
            <person name="Takeda T."/>
            <person name="Kim D.-W."/>
            <person name="She X."/>
            <person name="Barlow K.F."/>
            <person name="Bloom T."/>
            <person name="Bruford E."/>
            <person name="Chang J.L."/>
            <person name="Cuomo C.A."/>
            <person name="Eichler E."/>
            <person name="FitzGerald M.G."/>
            <person name="Jaffe D.B."/>
            <person name="LaButti K."/>
            <person name="Nicol R."/>
            <person name="Park H.-S."/>
            <person name="Seaman C."/>
            <person name="Sougnez C."/>
            <person name="Yang X."/>
            <person name="Zimmer A.R."/>
            <person name="Zody M.C."/>
            <person name="Birren B.W."/>
            <person name="Nusbaum C."/>
            <person name="Fujiyama A."/>
            <person name="Hattori M."/>
            <person name="Rogers J."/>
            <person name="Lander E.S."/>
            <person name="Sakaki Y."/>
        </authorList>
    </citation>
    <scope>NUCLEOTIDE SEQUENCE [LARGE SCALE GENOMIC DNA]</scope>
</reference>
<reference key="4">
    <citation type="journal article" date="2004" name="Genome Res.">
        <title>The status, quality, and expansion of the NIH full-length cDNA project: the Mammalian Gene Collection (MGC).</title>
        <authorList>
            <consortium name="The MGC Project Team"/>
        </authorList>
    </citation>
    <scope>NUCLEOTIDE SEQUENCE [LARGE SCALE MRNA] (ISOFORMS 1 AND 2)</scope>
    <source>
        <tissue>Brain</tissue>
    </source>
</reference>
<reference key="5">
    <citation type="journal article" date="2014" name="PLoS ONE">
        <title>Human variants in the neuronal basic helix-loop-helix/Per-Arnt-Sim (bHLH/PAS) transcription factor complex NPAS4/ARNT2 disrupt function.</title>
        <authorList>
            <person name="Bersten D.C."/>
            <person name="Bruning J.B."/>
            <person name="Peet D.J."/>
            <person name="Whitelaw M.L."/>
        </authorList>
    </citation>
    <scope>VARIANTS SER-147; CYS-208; LYS-257; ARG-293; ARG-296; LEU-317; ALA-344; ILE-359; SER-472; LYS-500; MET-587; ASP-702; TYR-750 AND ILE-777</scope>
    <scope>CHARACTERIZATION OF VARIANTS SER-147; CYS-208; LYS-257; ARG-293; ARG-296; LEU-317; ALA-344; ILE-359; SER-472; LYS-500; MET-587; ASP-702; TYR-750 AND ILE-777</scope>
    <scope>SUBUNIT</scope>
</reference>
<dbReference type="EMBL" id="AB049469">
    <property type="protein sequence ID" value="BAC19830.1"/>
    <property type="molecule type" value="mRNA"/>
</dbReference>
<dbReference type="EMBL" id="AK094025">
    <property type="protein sequence ID" value="BAC04271.1"/>
    <property type="status" value="ALT_FRAME"/>
    <property type="molecule type" value="mRNA"/>
</dbReference>
<dbReference type="EMBL" id="AK096253">
    <property type="protein sequence ID" value="BAC04738.1"/>
    <property type="molecule type" value="mRNA"/>
</dbReference>
<dbReference type="EMBL" id="AP001107">
    <property type="status" value="NOT_ANNOTATED_CDS"/>
    <property type="molecule type" value="Genomic_DNA"/>
</dbReference>
<dbReference type="EMBL" id="BC105001">
    <property type="protein sequence ID" value="AAI05002.1"/>
    <property type="molecule type" value="mRNA"/>
</dbReference>
<dbReference type="EMBL" id="BC105003">
    <property type="protein sequence ID" value="AAI05004.1"/>
    <property type="molecule type" value="mRNA"/>
</dbReference>
<dbReference type="EMBL" id="BC143630">
    <property type="protein sequence ID" value="AAI43631.1"/>
    <property type="molecule type" value="mRNA"/>
</dbReference>
<dbReference type="CCDS" id="CCDS8138.1">
    <molecule id="Q8IUM7-1"/>
</dbReference>
<dbReference type="RefSeq" id="NP_001305733.1">
    <property type="nucleotide sequence ID" value="NM_001318804.1"/>
</dbReference>
<dbReference type="RefSeq" id="NP_849195.2">
    <molecule id="Q8IUM7-1"/>
    <property type="nucleotide sequence ID" value="NM_178864.4"/>
</dbReference>
<dbReference type="RefSeq" id="XP_016873028.1">
    <molecule id="Q8IUM7-3"/>
    <property type="nucleotide sequence ID" value="XM_017017539.1"/>
</dbReference>
<dbReference type="SMR" id="Q8IUM7"/>
<dbReference type="BioGRID" id="129335">
    <property type="interactions" value="5"/>
</dbReference>
<dbReference type="FunCoup" id="Q8IUM7">
    <property type="interactions" value="652"/>
</dbReference>
<dbReference type="IntAct" id="Q8IUM7">
    <property type="interactions" value="1"/>
</dbReference>
<dbReference type="STRING" id="9606.ENSP00000311196"/>
<dbReference type="iPTMnet" id="Q8IUM7"/>
<dbReference type="PhosphoSitePlus" id="Q8IUM7"/>
<dbReference type="BioMuta" id="NPAS4"/>
<dbReference type="DMDM" id="74714317"/>
<dbReference type="MassIVE" id="Q8IUM7"/>
<dbReference type="PaxDb" id="9606-ENSP00000311196"/>
<dbReference type="PeptideAtlas" id="Q8IUM7"/>
<dbReference type="ProteomicsDB" id="70585">
    <molecule id="Q8IUM7-1"/>
</dbReference>
<dbReference type="ProteomicsDB" id="7213"/>
<dbReference type="Antibodypedia" id="30154">
    <property type="antibodies" value="211 antibodies from 30 providers"/>
</dbReference>
<dbReference type="DNASU" id="266743"/>
<dbReference type="Ensembl" id="ENST00000311034.7">
    <molecule id="Q8IUM7-1"/>
    <property type="protein sequence ID" value="ENSP00000311196.2"/>
    <property type="gene ID" value="ENSG00000174576.11"/>
</dbReference>
<dbReference type="Ensembl" id="ENST00000525148.1">
    <molecule id="Q8IUM7-3"/>
    <property type="protein sequence ID" value="ENSP00000433135.1"/>
    <property type="gene ID" value="ENSG00000174576.11"/>
</dbReference>
<dbReference type="GeneID" id="266743"/>
<dbReference type="KEGG" id="hsa:266743"/>
<dbReference type="MANE-Select" id="ENST00000311034.7">
    <property type="protein sequence ID" value="ENSP00000311196.2"/>
    <property type="RefSeq nucleotide sequence ID" value="NM_178864.4"/>
    <property type="RefSeq protein sequence ID" value="NP_849195.2"/>
</dbReference>
<dbReference type="UCSC" id="uc001ohx.2">
    <molecule id="Q8IUM7-1"/>
    <property type="organism name" value="human"/>
</dbReference>
<dbReference type="AGR" id="HGNC:18983"/>
<dbReference type="CTD" id="266743"/>
<dbReference type="DisGeNET" id="266743"/>
<dbReference type="GeneCards" id="NPAS4"/>
<dbReference type="HGNC" id="HGNC:18983">
    <property type="gene designation" value="NPAS4"/>
</dbReference>
<dbReference type="HPA" id="ENSG00000174576">
    <property type="expression patterns" value="Group enriched (brain, pituitary gland)"/>
</dbReference>
<dbReference type="MalaCards" id="NPAS4"/>
<dbReference type="MIM" id="608554">
    <property type="type" value="gene"/>
</dbReference>
<dbReference type="neXtProt" id="NX_Q8IUM7"/>
<dbReference type="OpenTargets" id="ENSG00000174576"/>
<dbReference type="PharmGKB" id="PA142671254"/>
<dbReference type="VEuPathDB" id="HostDB:ENSG00000174576"/>
<dbReference type="eggNOG" id="ENOG502QRXX">
    <property type="taxonomic scope" value="Eukaryota"/>
</dbReference>
<dbReference type="GeneTree" id="ENSGT00530000064165"/>
<dbReference type="HOGENOM" id="CLU_013890_0_0_1"/>
<dbReference type="InParanoid" id="Q8IUM7"/>
<dbReference type="OMA" id="TKTYFTQ"/>
<dbReference type="OrthoDB" id="9978016at2759"/>
<dbReference type="PAN-GO" id="Q8IUM7">
    <property type="GO annotations" value="3 GO annotations based on evolutionary models"/>
</dbReference>
<dbReference type="PhylomeDB" id="Q8IUM7"/>
<dbReference type="TreeFam" id="TF319684"/>
<dbReference type="PathwayCommons" id="Q8IUM7"/>
<dbReference type="Reactome" id="R-HSA-9768778">
    <property type="pathway name" value="Regulation of NPAS4 mRNA translation"/>
</dbReference>
<dbReference type="Reactome" id="R-HSA-9768919">
    <property type="pathway name" value="NPAS4 regulates expression of target genes"/>
</dbReference>
<dbReference type="SignaLink" id="Q8IUM7"/>
<dbReference type="BioGRID-ORCS" id="266743">
    <property type="hits" value="27 hits in 1171 CRISPR screens"/>
</dbReference>
<dbReference type="ChiTaRS" id="NPAS4">
    <property type="organism name" value="human"/>
</dbReference>
<dbReference type="GenomeRNAi" id="266743"/>
<dbReference type="Pharos" id="Q8IUM7">
    <property type="development level" value="Tbio"/>
</dbReference>
<dbReference type="PRO" id="PR:Q8IUM7"/>
<dbReference type="Proteomes" id="UP000005640">
    <property type="component" value="Chromosome 11"/>
</dbReference>
<dbReference type="RNAct" id="Q8IUM7">
    <property type="molecule type" value="protein"/>
</dbReference>
<dbReference type="Bgee" id="ENSG00000174576">
    <property type="expression patterns" value="Expressed in pituitary gland and 88 other cell types or tissues"/>
</dbReference>
<dbReference type="GO" id="GO:0000785">
    <property type="term" value="C:chromatin"/>
    <property type="evidence" value="ECO:0000247"/>
    <property type="project" value="NTNU_SB"/>
</dbReference>
<dbReference type="GO" id="GO:0005829">
    <property type="term" value="C:cytosol"/>
    <property type="evidence" value="ECO:0000304"/>
    <property type="project" value="Reactome"/>
</dbReference>
<dbReference type="GO" id="GO:0005654">
    <property type="term" value="C:nucleoplasm"/>
    <property type="evidence" value="ECO:0000304"/>
    <property type="project" value="Reactome"/>
</dbReference>
<dbReference type="GO" id="GO:0098794">
    <property type="term" value="C:postsynapse"/>
    <property type="evidence" value="ECO:0007669"/>
    <property type="project" value="GOC"/>
</dbReference>
<dbReference type="GO" id="GO:0005667">
    <property type="term" value="C:transcription regulator complex"/>
    <property type="evidence" value="ECO:0007669"/>
    <property type="project" value="Ensembl"/>
</dbReference>
<dbReference type="GO" id="GO:0001228">
    <property type="term" value="F:DNA-binding transcription activator activity, RNA polymerase II-specific"/>
    <property type="evidence" value="ECO:0000314"/>
    <property type="project" value="NTNU_SB"/>
</dbReference>
<dbReference type="GO" id="GO:0000981">
    <property type="term" value="F:DNA-binding transcription factor activity, RNA polymerase II-specific"/>
    <property type="evidence" value="ECO:0000314"/>
    <property type="project" value="UniProtKB"/>
</dbReference>
<dbReference type="GO" id="GO:0046982">
    <property type="term" value="F:protein heterodimerization activity"/>
    <property type="evidence" value="ECO:0000314"/>
    <property type="project" value="UniProtKB"/>
</dbReference>
<dbReference type="GO" id="GO:0044877">
    <property type="term" value="F:protein-containing complex binding"/>
    <property type="evidence" value="ECO:0007669"/>
    <property type="project" value="Ensembl"/>
</dbReference>
<dbReference type="GO" id="GO:0000978">
    <property type="term" value="F:RNA polymerase II cis-regulatory region sequence-specific DNA binding"/>
    <property type="evidence" value="ECO:0000314"/>
    <property type="project" value="NTNU_SB"/>
</dbReference>
<dbReference type="GO" id="GO:0000977">
    <property type="term" value="F:RNA polymerase II transcription regulatory region sequence-specific DNA binding"/>
    <property type="evidence" value="ECO:0000318"/>
    <property type="project" value="GO_Central"/>
</dbReference>
<dbReference type="GO" id="GO:0030154">
    <property type="term" value="P:cell differentiation"/>
    <property type="evidence" value="ECO:0007669"/>
    <property type="project" value="UniProtKB-KW"/>
</dbReference>
<dbReference type="GO" id="GO:0071386">
    <property type="term" value="P:cellular response to corticosterone stimulus"/>
    <property type="evidence" value="ECO:0007669"/>
    <property type="project" value="Ensembl"/>
</dbReference>
<dbReference type="GO" id="GO:0033554">
    <property type="term" value="P:cellular response to stress"/>
    <property type="evidence" value="ECO:0007669"/>
    <property type="project" value="Ensembl"/>
</dbReference>
<dbReference type="GO" id="GO:0060079">
    <property type="term" value="P:excitatory postsynaptic potential"/>
    <property type="evidence" value="ECO:0000250"/>
    <property type="project" value="UniProtKB"/>
</dbReference>
<dbReference type="GO" id="GO:0060080">
    <property type="term" value="P:inhibitory postsynaptic potential"/>
    <property type="evidence" value="ECO:0000250"/>
    <property type="project" value="UniProtKB"/>
</dbReference>
<dbReference type="GO" id="GO:1904862">
    <property type="term" value="P:inhibitory synapse assembly"/>
    <property type="evidence" value="ECO:0000250"/>
    <property type="project" value="UniProtKB"/>
</dbReference>
<dbReference type="GO" id="GO:0007612">
    <property type="term" value="P:learning"/>
    <property type="evidence" value="ECO:0000250"/>
    <property type="project" value="UniProtKB"/>
</dbReference>
<dbReference type="GO" id="GO:0007616">
    <property type="term" value="P:long-term memory"/>
    <property type="evidence" value="ECO:0000250"/>
    <property type="project" value="UniProtKB"/>
</dbReference>
<dbReference type="GO" id="GO:0045944">
    <property type="term" value="P:positive regulation of transcription by RNA polymerase II"/>
    <property type="evidence" value="ECO:0000314"/>
    <property type="project" value="UniProtKB"/>
</dbReference>
<dbReference type="GO" id="GO:0048167">
    <property type="term" value="P:regulation of synaptic plasticity"/>
    <property type="evidence" value="ECO:0000250"/>
    <property type="project" value="UniProtKB"/>
</dbReference>
<dbReference type="GO" id="GO:0032228">
    <property type="term" value="P:regulation of synaptic transmission, GABAergic"/>
    <property type="evidence" value="ECO:0000250"/>
    <property type="project" value="UniProtKB"/>
</dbReference>
<dbReference type="GO" id="GO:0006357">
    <property type="term" value="P:regulation of transcription by RNA polymerase II"/>
    <property type="evidence" value="ECO:0000318"/>
    <property type="project" value="GO_Central"/>
</dbReference>
<dbReference type="GO" id="GO:0007614">
    <property type="term" value="P:short-term memory"/>
    <property type="evidence" value="ECO:0000250"/>
    <property type="project" value="UniProtKB"/>
</dbReference>
<dbReference type="GO" id="GO:0035176">
    <property type="term" value="P:social behavior"/>
    <property type="evidence" value="ECO:0000250"/>
    <property type="project" value="UniProtKB"/>
</dbReference>
<dbReference type="CDD" id="cd19697">
    <property type="entry name" value="bHLH-PAS_NPAS4_PASD10"/>
    <property type="match status" value="1"/>
</dbReference>
<dbReference type="CDD" id="cd00130">
    <property type="entry name" value="PAS"/>
    <property type="match status" value="2"/>
</dbReference>
<dbReference type="FunFam" id="3.30.450.20:FF:000055">
    <property type="entry name" value="neuronal PAS domain-containing protein 4"/>
    <property type="match status" value="1"/>
</dbReference>
<dbReference type="FunFam" id="3.30.450.20:FF:000058">
    <property type="entry name" value="neuronal PAS domain-containing protein 4"/>
    <property type="match status" value="1"/>
</dbReference>
<dbReference type="Gene3D" id="3.30.450.20">
    <property type="entry name" value="PAS domain"/>
    <property type="match status" value="2"/>
</dbReference>
<dbReference type="InterPro" id="IPR011598">
    <property type="entry name" value="bHLH_dom"/>
</dbReference>
<dbReference type="InterPro" id="IPR056192">
    <property type="entry name" value="bHLH_NPAS4"/>
</dbReference>
<dbReference type="InterPro" id="IPR000014">
    <property type="entry name" value="PAS"/>
</dbReference>
<dbReference type="InterPro" id="IPR035965">
    <property type="entry name" value="PAS-like_dom_sf"/>
</dbReference>
<dbReference type="InterPro" id="IPR013655">
    <property type="entry name" value="PAS_fold_3"/>
</dbReference>
<dbReference type="PANTHER" id="PTHR23043">
    <property type="entry name" value="HYPOXIA-INDUCIBLE FACTOR 1 ALPHA"/>
    <property type="match status" value="1"/>
</dbReference>
<dbReference type="PANTHER" id="PTHR23043:SF24">
    <property type="entry name" value="NEURONAL PAS DOMAIN-CONTAINING PROTEIN 4"/>
    <property type="match status" value="1"/>
</dbReference>
<dbReference type="Pfam" id="PF23183">
    <property type="entry name" value="bHLH_NPAS4"/>
    <property type="match status" value="1"/>
</dbReference>
<dbReference type="Pfam" id="PF08447">
    <property type="entry name" value="PAS_3"/>
    <property type="match status" value="1"/>
</dbReference>
<dbReference type="SMART" id="SM00091">
    <property type="entry name" value="PAS"/>
    <property type="match status" value="2"/>
</dbReference>
<dbReference type="SUPFAM" id="SSF55785">
    <property type="entry name" value="PYP-like sensor domain (PAS domain)"/>
    <property type="match status" value="2"/>
</dbReference>
<dbReference type="PROSITE" id="PS50888">
    <property type="entry name" value="BHLH"/>
    <property type="match status" value="1"/>
</dbReference>
<dbReference type="PROSITE" id="PS50112">
    <property type="entry name" value="PAS"/>
    <property type="match status" value="2"/>
</dbReference>
<name>NPAS4_HUMAN</name>
<organism>
    <name type="scientific">Homo sapiens</name>
    <name type="common">Human</name>
    <dbReference type="NCBI Taxonomy" id="9606"/>
    <lineage>
        <taxon>Eukaryota</taxon>
        <taxon>Metazoa</taxon>
        <taxon>Chordata</taxon>
        <taxon>Craniata</taxon>
        <taxon>Vertebrata</taxon>
        <taxon>Euteleostomi</taxon>
        <taxon>Mammalia</taxon>
        <taxon>Eutheria</taxon>
        <taxon>Euarchontoglires</taxon>
        <taxon>Primates</taxon>
        <taxon>Haplorrhini</taxon>
        <taxon>Catarrhini</taxon>
        <taxon>Hominidae</taxon>
        <taxon>Homo</taxon>
    </lineage>
</organism>
<protein>
    <recommendedName>
        <fullName evidence="10">Neuronal PAS domain-containing protein 4</fullName>
        <shortName evidence="10">Neuronal PAS4</shortName>
    </recommendedName>
    <alternativeName>
        <fullName evidence="10">Class E basic helix-loop-helix protein 79</fullName>
        <shortName evidence="10">bHLHe79</shortName>
    </alternativeName>
    <alternativeName>
        <fullName evidence="8">HLH-PAS transcription factor NXF</fullName>
    </alternativeName>
    <alternativeName>
        <fullName evidence="10">PAS domain-containing protein 10</fullName>
    </alternativeName>
</protein>
<evidence type="ECO:0000250" key="1">
    <source>
        <dbReference type="UniProtKB" id="Q8BGD7"/>
    </source>
</evidence>
<evidence type="ECO:0000255" key="2"/>
<evidence type="ECO:0000255" key="3">
    <source>
        <dbReference type="PROSITE-ProRule" id="PRU00140"/>
    </source>
</evidence>
<evidence type="ECO:0000255" key="4">
    <source>
        <dbReference type="PROSITE-ProRule" id="PRU00981"/>
    </source>
</evidence>
<evidence type="ECO:0000256" key="5">
    <source>
        <dbReference type="SAM" id="MobiDB-lite"/>
    </source>
</evidence>
<evidence type="ECO:0000269" key="6">
    <source>
    </source>
</evidence>
<evidence type="ECO:0000269" key="7">
    <source>
    </source>
</evidence>
<evidence type="ECO:0000303" key="8">
    <source>
    </source>
</evidence>
<evidence type="ECO:0000303" key="9">
    <source>
    </source>
</evidence>
<evidence type="ECO:0000305" key="10"/>
<evidence type="ECO:0000312" key="11">
    <source>
        <dbReference type="HGNC" id="HGNC:18983"/>
    </source>
</evidence>
<comment type="function">
    <text evidence="1 6">Transcription factor expressed in neurons of the brain that regulates the excitatory-inhibitory balance within neural circuits and is required for contextual memory in the hippocampus (By similarity). Plays a key role in the structural and functional plasticity of neurons (By similarity). Acts as an early-response transcription factor in both excitatory and inhibitory neurons, where it induces distinct but overlapping sets of late-response genes in these two types of neurons, allowing the synapses that form on inhibitory and excitatory neurons to be modified by neuronal activity in a manner specific to their function within a circuit, thereby facilitating appropriate circuit responses to sensory experience (By similarity). In excitatory neurons, activates transcription of BDNF, which in turn controls the number of GABA-releasing synapses that form on excitatory neurons, thereby promoting an increased number of inhibitory synapses on excitatory neurons (By similarity). In inhibitory neurons, regulates a distinct set of target genes that serve to increase excitatory input onto somatostatin neurons, probably resulting in enhanced feedback inhibition within cortical circuits (By similarity). The excitatory and inhibitory balance in neurons affects a number of processes, such as short-term and long-term memory, acquisition of experience, fear memory, response to stress and social behavior (By similarity). Acts as a regulator of dendritic spine development in olfactory bulb granule cells in a sensory-experience-dependent manner by regulating expression of MDM2 (By similarity). Efficient DNA binding requires dimerization with another bHLH protein, such as ARNT, ARNT2 or BMAL1 (PubMed:14701734). Can activate the CME (CNS midline enhancer) element (PubMed:14701734).</text>
</comment>
<comment type="subunit">
    <text evidence="6 7">Efficient DNA binding requires dimerization with another bHLH protein (PubMed:14701734, PubMed:24465693). Heterodimer; forms a heterodimer with ARNT, ARNT2 or BMAL1 (PubMed:14701734, PubMed:24465693).</text>
</comment>
<comment type="subcellular location">
    <subcellularLocation>
        <location evidence="1 4">Nucleus</location>
    </subcellularLocation>
</comment>
<comment type="alternative products">
    <event type="alternative splicing"/>
    <isoform>
        <id>Q8IUM7-1</id>
        <name>1</name>
        <sequence type="displayed"/>
    </isoform>
    <isoform>
        <id>Q8IUM7-3</id>
        <name>2</name>
        <sequence type="described" ref="VSP_056596 VSP_056597"/>
    </isoform>
</comment>
<comment type="tissue specificity">
    <text evidence="6">Brain.</text>
</comment>
<comment type="PTM">
    <text evidence="1">Ubiquitinated, leading to degradation by the proteosome.</text>
</comment>
<comment type="sequence caution" evidence="10">
    <conflict type="frameshift">
        <sequence resource="EMBL-CDS" id="BAC04271"/>
    </conflict>
</comment>
<sequence>MYRSTKGASKARRDQINAEIRNLKELLPLAEADKVRLSYLHIMSLACIYTRKGVFFAGGTPLAGPTGLLSAQELEDIVAALPGFLLVFTAEGKLLYLSESVSEHLGHSMVDLVAQGDSIYDIIDPADHLTVRQQLTLPSALDTDRLFRCRFNTSKSLRRQSAGNKLVLIRGRFHAHPPGAYWAGNPVFTAFCAPLEPRPRPGPGPGPGPASLFLAMFQSRHAKDLALLDISESVLIYLGFERSELLCKSWYGLLHPEDLAHASAQHYRLLAESGDIQAEMVVRLQAKTGGWAWIYCLLYSEGPEGPITANNYPISDMEAWSLRQQLNSEDTQAAYVLGTPTMLPSFPENILSQEECSSTNPLFTAALGAPRSTSFPSAPELSVVSASEELPRPSKELDFSYLTFPSGPEPSLQAELSKDLVCTPPYTPHQPGGCAFLFSLHEPFQTHLPTPSSTLQEQLTPSTATFSDQLTPSSATFPDPLTSPLQGQLTETSVRSYEDQLTPCTSTFPDQLLPSTATFPEPLGSPAHEQLTPPSTAFQAHLDSPSQTFPEQLSPNPTKTYFAQEGCSFLYEKLPPSPSSPGNGDCTLLALAQLRGPLSVDVPLVPEGLLTPEASPVKQSFFHYSEKEQNEIDRLIQQISQLAQGMDRPFSAEAGTGGLEPLGGLEPLDSNLSLSGAGPPVLSLDLKPWKCQELDFLADPDNMFLEETPVEDIFMDLSTPDPSEEWGSGDPEAEGPGGAPSPCNNLSPEDHSFLEDLATYETAFETGVSAFPYDGFTDELHQLQSQVQDSFHEDGSGGEPTF</sequence>
<feature type="chain" id="PRO_0000248222" description="Neuronal PAS domain-containing protein 4">
    <location>
        <begin position="1"/>
        <end position="802"/>
    </location>
</feature>
<feature type="domain" description="bHLH" evidence="4">
    <location>
        <begin position="1"/>
        <end position="53"/>
    </location>
</feature>
<feature type="domain" description="PAS 1" evidence="3">
    <location>
        <begin position="70"/>
        <end position="144"/>
    </location>
</feature>
<feature type="domain" description="PAS 2" evidence="3">
    <location>
        <begin position="203"/>
        <end position="273"/>
    </location>
</feature>
<feature type="domain" description="PAC">
    <location>
        <begin position="278"/>
        <end position="317"/>
    </location>
</feature>
<feature type="region of interest" description="Basic motif; degenerate" evidence="4">
    <location>
        <begin position="1"/>
        <end position="13"/>
    </location>
</feature>
<feature type="region of interest" description="Helix-loop-helix motif" evidence="4">
    <location>
        <begin position="14"/>
        <end position="53"/>
    </location>
</feature>
<feature type="region of interest" description="Disordered" evidence="5">
    <location>
        <begin position="466"/>
        <end position="485"/>
    </location>
</feature>
<feature type="region of interest" description="Disordered" evidence="5">
    <location>
        <begin position="506"/>
        <end position="555"/>
    </location>
</feature>
<feature type="region of interest" description="Disordered" evidence="5">
    <location>
        <begin position="717"/>
        <end position="749"/>
    </location>
</feature>
<feature type="coiled-coil region" evidence="2">
    <location>
        <begin position="5"/>
        <end position="38"/>
    </location>
</feature>
<feature type="coiled-coil region" evidence="2">
    <location>
        <begin position="624"/>
        <end position="648"/>
    </location>
</feature>
<feature type="compositionally biased region" description="Polar residues" evidence="5">
    <location>
        <begin position="466"/>
        <end position="476"/>
    </location>
</feature>
<feature type="compositionally biased region" description="Polar residues" evidence="5">
    <location>
        <begin position="506"/>
        <end position="518"/>
    </location>
</feature>
<feature type="compositionally biased region" description="Polar residues" evidence="5">
    <location>
        <begin position="532"/>
        <end position="555"/>
    </location>
</feature>
<feature type="splice variant" id="VSP_056596" description="In isoform 2." evidence="9">
    <original>V</original>
    <variation>G</variation>
    <location>
        <position position="234"/>
    </location>
</feature>
<feature type="splice variant" id="VSP_056597" description="In isoform 2." evidence="9">
    <location>
        <begin position="235"/>
        <end position="802"/>
    </location>
</feature>
<feature type="sequence variant" id="VAR_076845" description="Decreased transcription factor activity due to impaired interaction with ARNT2; dbSNP:rs79072452." evidence="7">
    <original>F</original>
    <variation>S</variation>
    <location>
        <position position="147"/>
    </location>
</feature>
<feature type="sequence variant" id="VAR_076846" description="Does not affect the transcription factor activity; dbSNP:rs905768." evidence="7">
    <original>G</original>
    <variation>C</variation>
    <location>
        <position position="208"/>
    </location>
</feature>
<feature type="sequence variant" id="VAR_076847" description="Decreased transcription factor activity; dbSNP:rs375915619." evidence="7">
    <original>E</original>
    <variation>K</variation>
    <location>
        <position position="257"/>
    </location>
</feature>
<feature type="sequence variant" id="VAR_076848" description="Does not affect the transcription factor activity; dbSNP:rs200310338." evidence="7">
    <original>W</original>
    <variation>R</variation>
    <location>
        <position position="293"/>
    </location>
</feature>
<feature type="sequence variant" id="VAR_076849" description="Does not affect the transcription factor activity." evidence="7">
    <original>C</original>
    <variation>R</variation>
    <location>
        <position position="296"/>
    </location>
</feature>
<feature type="sequence variant" id="VAR_076850" description="Does not affect the transcription factor activity; dbSNP:rs76159120." evidence="7">
    <original>M</original>
    <variation>L</variation>
    <location>
        <position position="317"/>
    </location>
</feature>
<feature type="sequence variant" id="VAR_076851" description="Does not affect the transcription factor activity; dbSNP:rs140299985." evidence="7">
    <original>P</original>
    <variation>A</variation>
    <location>
        <position position="344"/>
    </location>
</feature>
<feature type="sequence variant" id="VAR_076852" description="Does not affect the transcription factor activity; dbSNP:rs145746289." evidence="7">
    <original>T</original>
    <variation>I</variation>
    <location>
        <position position="359"/>
    </location>
</feature>
<feature type="sequence variant" id="VAR_076853" description="Does not affect the transcription factor activity; dbSNP:rs150700317." evidence="7">
    <original>P</original>
    <variation>S</variation>
    <location>
        <position position="472"/>
    </location>
</feature>
<feature type="sequence variant" id="VAR_076854" description="Does not affect the transcription factor activity; dbSNP:rs71457718." evidence="7">
    <original>Q</original>
    <variation>K</variation>
    <location>
        <position position="500"/>
    </location>
</feature>
<feature type="sequence variant" id="VAR_076855" description="Does not affect the transcription factor activity; dbSNP:rs142965018." evidence="7">
    <original>T</original>
    <variation>M</variation>
    <location>
        <position position="587"/>
    </location>
</feature>
<feature type="sequence variant" id="VAR_076856" description="Does not affect the transcription factor activity; dbSNP:rs147463475." evidence="7">
    <original>N</original>
    <variation>D</variation>
    <location>
        <position position="702"/>
    </location>
</feature>
<feature type="sequence variant" id="VAR_076857" description="Does not affect the transcription factor activity; dbSNP:rs139929410." evidence="7">
    <original>D</original>
    <variation>Y</variation>
    <location>
        <position position="750"/>
    </location>
</feature>
<feature type="sequence variant" id="VAR_076858" description="Does not affect the transcription factor activity; dbSNP:rs111848728." evidence="7">
    <original>T</original>
    <variation>I</variation>
    <location>
        <position position="777"/>
    </location>
</feature>
<feature type="sequence conflict" description="In Ref. 2; BAC04738." evidence="10" ref="2">
    <original>Q</original>
    <variation>R</variation>
    <location>
        <position position="72"/>
    </location>
</feature>
<feature type="sequence conflict" description="In Ref. 2; BAC04738." evidence="10" ref="2">
    <original>E</original>
    <variation>K</variation>
    <location>
        <position position="99"/>
    </location>
</feature>
<feature type="sequence conflict" description="In Ref. 2; BAC04738." evidence="10" ref="2">
    <original>L</original>
    <variation>H</variation>
    <location>
        <position position="390"/>
    </location>
</feature>
<feature type="sequence conflict" description="In Ref. 2; BAC04271." evidence="10" ref="2">
    <original>D</original>
    <variation>G</variation>
    <location>
        <position position="479"/>
    </location>
</feature>
<feature type="sequence conflict" description="In Ref. 2; BAC04271." evidence="10" ref="2">
    <original>G</original>
    <variation>E</variation>
    <location>
        <position position="663"/>
    </location>
</feature>
<feature type="sequence conflict" description="In Ref. 2; BAC04271." evidence="10" ref="2">
    <original>E</original>
    <variation>K</variation>
    <location>
        <position position="707"/>
    </location>
</feature>
<feature type="sequence conflict" description="In Ref. 2; BAC04271." evidence="10" ref="2">
    <original>T</original>
    <variation>A</variation>
    <location>
        <position position="777"/>
    </location>
</feature>
<accession>Q8IUM7</accession>
<accession>B7ZL81</accession>
<accession>Q8N8S5</accession>
<accession>Q8N9Q9</accession>
<gene>
    <name evidence="11" type="primary">NPAS4</name>
    <name evidence="11" type="synonym">BHLHE79</name>
    <name evidence="8" type="synonym">NXF</name>
    <name evidence="11" type="synonym">PASD10</name>
</gene>
<proteinExistence type="evidence at protein level"/>